<organism>
    <name type="scientific">Rhodospirillum rubrum (strain ATCC 11170 / ATH 1.1.1 / DSM 467 / LMG 4362 / NCIMB 8255 / S1)</name>
    <dbReference type="NCBI Taxonomy" id="269796"/>
    <lineage>
        <taxon>Bacteria</taxon>
        <taxon>Pseudomonadati</taxon>
        <taxon>Pseudomonadota</taxon>
        <taxon>Alphaproteobacteria</taxon>
        <taxon>Rhodospirillales</taxon>
        <taxon>Rhodospirillaceae</taxon>
        <taxon>Rhodospirillum</taxon>
    </lineage>
</organism>
<proteinExistence type="inferred from homology"/>
<evidence type="ECO:0000255" key="1">
    <source>
        <dbReference type="PROSITE-ProRule" id="PRU00520"/>
    </source>
</evidence>
<evidence type="ECO:0000305" key="2"/>
<name>ACYP_RHORT</name>
<dbReference type="EC" id="3.6.1.7"/>
<dbReference type="EMBL" id="CP000230">
    <property type="protein sequence ID" value="ABC23451.1"/>
    <property type="molecule type" value="Genomic_DNA"/>
</dbReference>
<dbReference type="RefSeq" id="WP_011390404.1">
    <property type="nucleotide sequence ID" value="NC_007643.1"/>
</dbReference>
<dbReference type="RefSeq" id="YP_427738.1">
    <property type="nucleotide sequence ID" value="NC_007643.1"/>
</dbReference>
<dbReference type="SMR" id="Q2RQZ4"/>
<dbReference type="STRING" id="269796.Rru_A2654"/>
<dbReference type="EnsemblBacteria" id="ABC23451">
    <property type="protein sequence ID" value="ABC23451"/>
    <property type="gene ID" value="Rru_A2654"/>
</dbReference>
<dbReference type="KEGG" id="rru:Rru_A2654"/>
<dbReference type="PATRIC" id="fig|269796.9.peg.2761"/>
<dbReference type="eggNOG" id="COG1254">
    <property type="taxonomic scope" value="Bacteria"/>
</dbReference>
<dbReference type="HOGENOM" id="CLU_141932_3_1_5"/>
<dbReference type="PhylomeDB" id="Q2RQZ4"/>
<dbReference type="Proteomes" id="UP000001929">
    <property type="component" value="Chromosome"/>
</dbReference>
<dbReference type="GO" id="GO:0003998">
    <property type="term" value="F:acylphosphatase activity"/>
    <property type="evidence" value="ECO:0007669"/>
    <property type="project" value="UniProtKB-EC"/>
</dbReference>
<dbReference type="Gene3D" id="3.30.70.100">
    <property type="match status" value="1"/>
</dbReference>
<dbReference type="InterPro" id="IPR020456">
    <property type="entry name" value="Acylphosphatase"/>
</dbReference>
<dbReference type="InterPro" id="IPR001792">
    <property type="entry name" value="Acylphosphatase-like_dom"/>
</dbReference>
<dbReference type="InterPro" id="IPR036046">
    <property type="entry name" value="Acylphosphatase-like_dom_sf"/>
</dbReference>
<dbReference type="InterPro" id="IPR017968">
    <property type="entry name" value="Acylphosphatase_CS"/>
</dbReference>
<dbReference type="PANTHER" id="PTHR47268">
    <property type="entry name" value="ACYLPHOSPHATASE"/>
    <property type="match status" value="1"/>
</dbReference>
<dbReference type="PANTHER" id="PTHR47268:SF4">
    <property type="entry name" value="ACYLPHOSPHATASE"/>
    <property type="match status" value="1"/>
</dbReference>
<dbReference type="Pfam" id="PF00708">
    <property type="entry name" value="Acylphosphatase"/>
    <property type="match status" value="1"/>
</dbReference>
<dbReference type="PRINTS" id="PR00112">
    <property type="entry name" value="ACYLPHPHTASE"/>
</dbReference>
<dbReference type="SUPFAM" id="SSF54975">
    <property type="entry name" value="Acylphosphatase/BLUF domain-like"/>
    <property type="match status" value="1"/>
</dbReference>
<dbReference type="PROSITE" id="PS00151">
    <property type="entry name" value="ACYLPHOSPHATASE_2"/>
    <property type="match status" value="1"/>
</dbReference>
<dbReference type="PROSITE" id="PS51160">
    <property type="entry name" value="ACYLPHOSPHATASE_3"/>
    <property type="match status" value="1"/>
</dbReference>
<gene>
    <name type="primary">acyP</name>
    <name type="ordered locus">Rru_A2654</name>
</gene>
<feature type="chain" id="PRO_0000326789" description="Acylphosphatase">
    <location>
        <begin position="1"/>
        <end position="91"/>
    </location>
</feature>
<feature type="domain" description="Acylphosphatase-like" evidence="1">
    <location>
        <begin position="3"/>
        <end position="89"/>
    </location>
</feature>
<feature type="active site" evidence="1">
    <location>
        <position position="18"/>
    </location>
</feature>
<feature type="active site" evidence="1">
    <location>
        <position position="36"/>
    </location>
</feature>
<reference key="1">
    <citation type="journal article" date="2011" name="Stand. Genomic Sci.">
        <title>Complete genome sequence of Rhodospirillum rubrum type strain (S1).</title>
        <authorList>
            <person name="Munk A.C."/>
            <person name="Copeland A."/>
            <person name="Lucas S."/>
            <person name="Lapidus A."/>
            <person name="Del Rio T.G."/>
            <person name="Barry K."/>
            <person name="Detter J.C."/>
            <person name="Hammon N."/>
            <person name="Israni S."/>
            <person name="Pitluck S."/>
            <person name="Brettin T."/>
            <person name="Bruce D."/>
            <person name="Han C."/>
            <person name="Tapia R."/>
            <person name="Gilna P."/>
            <person name="Schmutz J."/>
            <person name="Larimer F."/>
            <person name="Land M."/>
            <person name="Kyrpides N.C."/>
            <person name="Mavromatis K."/>
            <person name="Richardson P."/>
            <person name="Rohde M."/>
            <person name="Goeker M."/>
            <person name="Klenk H.P."/>
            <person name="Zhang Y."/>
            <person name="Roberts G.P."/>
            <person name="Reslewic S."/>
            <person name="Schwartz D.C."/>
        </authorList>
    </citation>
    <scope>NUCLEOTIDE SEQUENCE [LARGE SCALE GENOMIC DNA]</scope>
    <source>
        <strain>ATCC 11170 / ATH 1.1.1 / DSM 467 / LMG 4362 / NCIMB 8255 / S1</strain>
    </source>
</reference>
<keyword id="KW-0378">Hydrolase</keyword>
<keyword id="KW-1185">Reference proteome</keyword>
<accession>Q2RQZ4</accession>
<protein>
    <recommendedName>
        <fullName>Acylphosphatase</fullName>
        <ecNumber>3.6.1.7</ecNumber>
    </recommendedName>
    <alternativeName>
        <fullName>Acylphosphate phosphohydrolase</fullName>
    </alternativeName>
</protein>
<sequence>MKTLLVRISGKVQGVWYRGWTVETAKGLGLAGWVRNRADGTVEALFHGPEAAVEAMLIACRGGPPSARVDDLRVTPVAAPDQPGFSQKPSL</sequence>
<comment type="catalytic activity">
    <reaction>
        <text>an acyl phosphate + H2O = a carboxylate + phosphate + H(+)</text>
        <dbReference type="Rhea" id="RHEA:14965"/>
        <dbReference type="ChEBI" id="CHEBI:15377"/>
        <dbReference type="ChEBI" id="CHEBI:15378"/>
        <dbReference type="ChEBI" id="CHEBI:29067"/>
        <dbReference type="ChEBI" id="CHEBI:43474"/>
        <dbReference type="ChEBI" id="CHEBI:59918"/>
        <dbReference type="EC" id="3.6.1.7"/>
    </reaction>
</comment>
<comment type="similarity">
    <text evidence="2">Belongs to the acylphosphatase family.</text>
</comment>